<feature type="chain" id="PRO_0000406358" description="4-hydroxyphenylalkanoate adenylyltransferase">
    <location>
        <begin position="1"/>
        <end position="619"/>
    </location>
</feature>
<comment type="function">
    <text evidence="1">Catalyzes the activation of long-chain fatty acids as acyl-adenylates (acyl-AMP), which are then transferred to the multifunctional polyketide synthase PpsA for further chain extension. Involved in the biosynthesis of phenolphthiocerol, which is an important intermediate in the biosynthesis of phenolic glycolipid (PGL), also called mycosid B.</text>
</comment>
<comment type="catalytic activity">
    <reaction evidence="1">
        <text>17-(4-hydroxyphenyl)heptadecanoate + holo-[(phenol)carboxyphthiodiolenone synthase] + ATP = 17-(4-hydroxyphenyl)heptadecanoyl-[(phenol)carboxyphthiodiolenone synthase] + AMP + diphosphate</text>
        <dbReference type="Rhea" id="RHEA:55720"/>
        <dbReference type="Rhea" id="RHEA-COMP:14271"/>
        <dbReference type="Rhea" id="RHEA-COMP:14272"/>
        <dbReference type="ChEBI" id="CHEBI:30616"/>
        <dbReference type="ChEBI" id="CHEBI:33019"/>
        <dbReference type="ChEBI" id="CHEBI:64479"/>
        <dbReference type="ChEBI" id="CHEBI:91233"/>
        <dbReference type="ChEBI" id="CHEBI:133300"/>
        <dbReference type="ChEBI" id="CHEBI:456215"/>
        <dbReference type="EC" id="6.2.1.51"/>
    </reaction>
</comment>
<comment type="catalytic activity">
    <reaction evidence="1">
        <text>19-(4-hydroxyphenyl)nonadecanoate + holo-[(phenol)carboxyphthiodiolenone synthase] + ATP = 19-(4-hydroxyphenyl)nonadecanoyl-[(phenol)carboxyphthiodiolenone synthase] + AMP + diphosphate</text>
        <dbReference type="Rhea" id="RHEA:55728"/>
        <dbReference type="Rhea" id="RHEA-COMP:14271"/>
        <dbReference type="Rhea" id="RHEA-COMP:14273"/>
        <dbReference type="ChEBI" id="CHEBI:30616"/>
        <dbReference type="ChEBI" id="CHEBI:33019"/>
        <dbReference type="ChEBI" id="CHEBI:64479"/>
        <dbReference type="ChEBI" id="CHEBI:91236"/>
        <dbReference type="ChEBI" id="CHEBI:133301"/>
        <dbReference type="ChEBI" id="CHEBI:456215"/>
        <dbReference type="EC" id="6.2.1.51"/>
    </reaction>
</comment>
<comment type="pathway">
    <text evidence="1">Lipid metabolism; fatty acid biosynthesis.</text>
</comment>
<comment type="similarity">
    <text evidence="2">Belongs to the ATP-dependent AMP-binding enzyme family.</text>
</comment>
<keyword id="KW-0067">ATP-binding</keyword>
<keyword id="KW-0276">Fatty acid metabolism</keyword>
<keyword id="KW-0436">Ligase</keyword>
<keyword id="KW-0443">Lipid metabolism</keyword>
<keyword id="KW-0547">Nucleotide-binding</keyword>
<keyword id="KW-1185">Reference proteome</keyword>
<sequence length="619" mass="67477">MKTNSSFHAAGEVATQPAWGTGEQAAQPLNGSTSRFAMSESSLADLLQKAASQYPNRAAYKFIDYDTDPAGFTETVTWWQVHRRAMIVAEELWIYASSGDRVAILAPQGLEYIIAFMGVLQAGLIAVPLPVPQFGIHDERISSALRDSAPSIILTTSSVIDEVTTYAPHACAAQGQSAPIVVAVDALDLSSSRALDPTRFERPSTAYLQYTSGSTRAPAGVVLSHKNVITNCVQLMSDYIGDSEKVPSTPVSWLPFYHDMGLMLGIILPMINQDTAVLMSPMAFLQRPARWMQLLAKHRAQISSAPNFGFELAVRRTSDDDMAGLDLGHVRTIVTGAERVNVATLRRFTERFAPFNLSETAIRPSYGLAEATVYVATAGPGRAPKSVCFDYQQLSVGQAKRTENGSEGANLVSYGAPRASTVRIVDPETRMENPAGTVGEIWVQGDNVGLGYWRNPQQTEATFRARLVTPSPGTSEGPWLRTGDLGVIFEGELFITGRIKELLVVDGANHYPEDIEATIQEITGGRVVAIAVPDDRTEKLVTIIELMKRGRTDEEEKNRLRTVKREVASAISRSHRLRVADVVMVAPGSIPVTTSGKVRRSASVERYLHHEFSRLDAMA</sequence>
<gene>
    <name type="primary">fadD29</name>
    <name type="ordered locus">BQ2027_MB2974C</name>
</gene>
<name>FAA29_MYCBO</name>
<proteinExistence type="inferred from homology"/>
<protein>
    <recommendedName>
        <fullName>4-hydroxyphenylalkanoate adenylyltransferase</fullName>
        <ecNumber evidence="1">6.2.1.51</ecNumber>
    </recommendedName>
    <alternativeName>
        <fullName>Acyl-AMP synthase</fullName>
    </alternativeName>
    <alternativeName>
        <fullName>Long-chain-fatty-acid--AMP ligase FadD29</fullName>
        <shortName>FAAL</shortName>
    </alternativeName>
</protein>
<evidence type="ECO:0000250" key="1">
    <source>
        <dbReference type="UniProtKB" id="P95141"/>
    </source>
</evidence>
<evidence type="ECO:0000305" key="2"/>
<dbReference type="EC" id="6.2.1.51" evidence="1"/>
<dbReference type="EMBL" id="LT708304">
    <property type="protein sequence ID" value="SIU01596.1"/>
    <property type="molecule type" value="Genomic_DNA"/>
</dbReference>
<dbReference type="SMR" id="Q7TXK5"/>
<dbReference type="KEGG" id="mbo:BQ2027_MB2974C"/>
<dbReference type="BioCyc" id="MetaCyc:MONOMER-19624"/>
<dbReference type="UniPathway" id="UPA00094"/>
<dbReference type="Proteomes" id="UP000001419">
    <property type="component" value="Chromosome"/>
</dbReference>
<dbReference type="GO" id="GO:0005886">
    <property type="term" value="C:plasma membrane"/>
    <property type="evidence" value="ECO:0007669"/>
    <property type="project" value="TreeGrafter"/>
</dbReference>
<dbReference type="GO" id="GO:0070566">
    <property type="term" value="F:adenylyltransferase activity"/>
    <property type="evidence" value="ECO:0007669"/>
    <property type="project" value="TreeGrafter"/>
</dbReference>
<dbReference type="GO" id="GO:0005524">
    <property type="term" value="F:ATP binding"/>
    <property type="evidence" value="ECO:0007669"/>
    <property type="project" value="UniProtKB-KW"/>
</dbReference>
<dbReference type="GO" id="GO:0016874">
    <property type="term" value="F:ligase activity"/>
    <property type="evidence" value="ECO:0007669"/>
    <property type="project" value="UniProtKB-KW"/>
</dbReference>
<dbReference type="GO" id="GO:0071766">
    <property type="term" value="P:Actinobacterium-type cell wall biogenesis"/>
    <property type="evidence" value="ECO:0000250"/>
    <property type="project" value="UniProtKB"/>
</dbReference>
<dbReference type="GO" id="GO:0006633">
    <property type="term" value="P:fatty acid biosynthetic process"/>
    <property type="evidence" value="ECO:0007669"/>
    <property type="project" value="UniProtKB-UniPathway"/>
</dbReference>
<dbReference type="GO" id="GO:0008610">
    <property type="term" value="P:lipid biosynthetic process"/>
    <property type="evidence" value="ECO:0000250"/>
    <property type="project" value="UniProtKB"/>
</dbReference>
<dbReference type="CDD" id="cd05931">
    <property type="entry name" value="FAAL"/>
    <property type="match status" value="1"/>
</dbReference>
<dbReference type="FunFam" id="3.30.300.30:FF:000016">
    <property type="entry name" value="Fatty-acid-CoA ligase FadD26"/>
    <property type="match status" value="1"/>
</dbReference>
<dbReference type="FunFam" id="3.40.50.12780:FF:000013">
    <property type="entry name" value="Long-chain-fatty-acid--AMP ligase FadD32"/>
    <property type="match status" value="1"/>
</dbReference>
<dbReference type="Gene3D" id="3.30.300.30">
    <property type="match status" value="1"/>
</dbReference>
<dbReference type="Gene3D" id="3.40.50.12780">
    <property type="entry name" value="N-terminal domain of ligase-like"/>
    <property type="match status" value="1"/>
</dbReference>
<dbReference type="InterPro" id="IPR025110">
    <property type="entry name" value="AMP-bd_C"/>
</dbReference>
<dbReference type="InterPro" id="IPR045851">
    <property type="entry name" value="AMP-bd_C_sf"/>
</dbReference>
<dbReference type="InterPro" id="IPR000873">
    <property type="entry name" value="AMP-dep_synth/lig_dom"/>
</dbReference>
<dbReference type="InterPro" id="IPR042099">
    <property type="entry name" value="ANL_N_sf"/>
</dbReference>
<dbReference type="InterPro" id="IPR040097">
    <property type="entry name" value="FAAL/FAAC"/>
</dbReference>
<dbReference type="NCBIfam" id="NF004509">
    <property type="entry name" value="PRK05850.1"/>
    <property type="match status" value="1"/>
</dbReference>
<dbReference type="PANTHER" id="PTHR22754:SF32">
    <property type="entry name" value="DISCO-INTERACTING PROTEIN 2"/>
    <property type="match status" value="1"/>
</dbReference>
<dbReference type="PANTHER" id="PTHR22754">
    <property type="entry name" value="DISCO-INTERACTING PROTEIN 2 DIP2 -RELATED"/>
    <property type="match status" value="1"/>
</dbReference>
<dbReference type="Pfam" id="PF00501">
    <property type="entry name" value="AMP-binding"/>
    <property type="match status" value="1"/>
</dbReference>
<dbReference type="Pfam" id="PF23024">
    <property type="entry name" value="AMP-dom_DIP2-like"/>
    <property type="match status" value="1"/>
</dbReference>
<dbReference type="SUPFAM" id="SSF56801">
    <property type="entry name" value="Acetyl-CoA synthetase-like"/>
    <property type="match status" value="1"/>
</dbReference>
<reference key="1">
    <citation type="journal article" date="2003" name="Proc. Natl. Acad. Sci. U.S.A.">
        <title>The complete genome sequence of Mycobacterium bovis.</title>
        <authorList>
            <person name="Garnier T."/>
            <person name="Eiglmeier K."/>
            <person name="Camus J.-C."/>
            <person name="Medina N."/>
            <person name="Mansoor H."/>
            <person name="Pryor M."/>
            <person name="Duthoy S."/>
            <person name="Grondin S."/>
            <person name="Lacroix C."/>
            <person name="Monsempe C."/>
            <person name="Simon S."/>
            <person name="Harris B."/>
            <person name="Atkin R."/>
            <person name="Doggett J."/>
            <person name="Mayes R."/>
            <person name="Keating L."/>
            <person name="Wheeler P.R."/>
            <person name="Parkhill J."/>
            <person name="Barrell B.G."/>
            <person name="Cole S.T."/>
            <person name="Gordon S.V."/>
            <person name="Hewinson R.G."/>
        </authorList>
    </citation>
    <scope>NUCLEOTIDE SEQUENCE [LARGE SCALE GENOMIC DNA]</scope>
    <source>
        <strain>ATCC BAA-935 / AF2122/97</strain>
    </source>
</reference>
<reference key="2">
    <citation type="journal article" date="2017" name="Genome Announc.">
        <title>Updated reference genome sequence and annotation of Mycobacterium bovis AF2122/97.</title>
        <authorList>
            <person name="Malone K.M."/>
            <person name="Farrell D."/>
            <person name="Stuber T.P."/>
            <person name="Schubert O.T."/>
            <person name="Aebersold R."/>
            <person name="Robbe-Austerman S."/>
            <person name="Gordon S.V."/>
        </authorList>
    </citation>
    <scope>NUCLEOTIDE SEQUENCE [LARGE SCALE GENOMIC DNA]</scope>
    <scope>GENOME REANNOTATION</scope>
    <source>
        <strain>ATCC BAA-935 / AF2122/97</strain>
    </source>
</reference>
<organism>
    <name type="scientific">Mycobacterium bovis (strain ATCC BAA-935 / AF2122/97)</name>
    <dbReference type="NCBI Taxonomy" id="233413"/>
    <lineage>
        <taxon>Bacteria</taxon>
        <taxon>Bacillati</taxon>
        <taxon>Actinomycetota</taxon>
        <taxon>Actinomycetes</taxon>
        <taxon>Mycobacteriales</taxon>
        <taxon>Mycobacteriaceae</taxon>
        <taxon>Mycobacterium</taxon>
        <taxon>Mycobacterium tuberculosis complex</taxon>
    </lineage>
</organism>
<accession>Q7TXK5</accession>
<accession>A0A1R3Y3G5</accession>
<accession>X2BMY4</accession>